<gene>
    <name evidence="4" type="primary">Arfip2</name>
</gene>
<evidence type="ECO:0000250" key="1">
    <source>
        <dbReference type="UniProtKB" id="P53365"/>
    </source>
</evidence>
<evidence type="ECO:0000255" key="2">
    <source>
        <dbReference type="PROSITE-ProRule" id="PRU00294"/>
    </source>
</evidence>
<evidence type="ECO:0000256" key="3">
    <source>
        <dbReference type="SAM" id="MobiDB-lite"/>
    </source>
</evidence>
<evidence type="ECO:0000312" key="4">
    <source>
        <dbReference type="RGD" id="1303204"/>
    </source>
</evidence>
<accession>Q6AY65</accession>
<feature type="chain" id="PRO_0000064669" description="Arfaptin-2">
    <location>
        <begin position="1"/>
        <end position="341"/>
    </location>
</feature>
<feature type="domain" description="AH" evidence="2">
    <location>
        <begin position="121"/>
        <end position="321"/>
    </location>
</feature>
<feature type="region of interest" description="Disordered" evidence="3">
    <location>
        <begin position="46"/>
        <end position="84"/>
    </location>
</feature>
<feature type="compositionally biased region" description="Low complexity" evidence="3">
    <location>
        <begin position="65"/>
        <end position="81"/>
    </location>
</feature>
<feature type="modified residue" description="Phosphoserine" evidence="1">
    <location>
        <position position="72"/>
    </location>
</feature>
<comment type="function">
    <text evidence="1">Plays a role in constitutive metalloproteinase (MMP) secretion from the trans Golgi network. May have important functions during vesicle biogenesis at certain cargo subdomains, which could be predominantly utilized by secreted MMPs, such as MMP7 and MMP2. Also involved in autophagy by regulating the starvation-dependent trafficking of ATG9A vesicles which deliver the phosphatidylinositol 4-kinase beta (PI4KB) to the autophagosome initiation site. Involved in phagophore growth during mitophagy by regulating ATG9A trafficking to mitochondria. In addition, plays a role in NF-kappa-B inhibition by interacting with IKBKB and IKBKG.</text>
</comment>
<comment type="subunit">
    <text evidence="1">Forms homodimers or heterodimers with ARFIP1. Interacts with RAC1. Specifically binds to GTP-bound ARF1 and ARF6, but binds to RAC1.GTP and RAC1.GDP with similar affinities. Interacts with ARL1. Interacts (via N-terminus) with IKBKB and IKBKG; these interactions inhibit activation of NF-kappa-B.</text>
</comment>
<comment type="subcellular location">
    <subcellularLocation>
        <location evidence="1">Golgi apparatus</location>
    </subcellularLocation>
    <subcellularLocation>
        <location evidence="1">Golgi apparatus</location>
        <location evidence="1">trans-Golgi network membrane</location>
    </subcellularLocation>
</comment>
<name>ARFP2_RAT</name>
<organism>
    <name type="scientific">Rattus norvegicus</name>
    <name type="common">Rat</name>
    <dbReference type="NCBI Taxonomy" id="10116"/>
    <lineage>
        <taxon>Eukaryota</taxon>
        <taxon>Metazoa</taxon>
        <taxon>Chordata</taxon>
        <taxon>Craniata</taxon>
        <taxon>Vertebrata</taxon>
        <taxon>Euteleostomi</taxon>
        <taxon>Mammalia</taxon>
        <taxon>Eutheria</taxon>
        <taxon>Euarchontoglires</taxon>
        <taxon>Glires</taxon>
        <taxon>Rodentia</taxon>
        <taxon>Myomorpha</taxon>
        <taxon>Muroidea</taxon>
        <taxon>Muridae</taxon>
        <taxon>Murinae</taxon>
        <taxon>Rattus</taxon>
    </lineage>
</organism>
<proteinExistence type="evidence at transcript level"/>
<sequence>MTDGILGKAATMEIPIHGNGEAGQLPEDDGLEQDLQQVMVSGPNLNETSIVSGGYGGSGDGLIPTGSGRHPSHSTSPSGPGDEVARGIAGEKFDIVKKWGINTYKCTKQLLSERFGRGSRTVDLELELQIELLRETKRKYESVLQLGRALTAHLYSLLQTQHALGDAFADLSQKSPELQEEFGYNAETQKLLCKNGETLLGAVNFFVSSINTLVTKTMEDTLMTVKQYEAARLEYDAYRTDLEELSLGPRDAGTRGRLESAQATFQTHRDKYEKLRGDVAIKLKFLEENKIKVMHKQLLLFHNAVSAYFAGNQKQLEQTLQQFNIKLRPPGAEKPSWLEEQ</sequence>
<keyword id="KW-0072">Autophagy</keyword>
<keyword id="KW-0333">Golgi apparatus</keyword>
<keyword id="KW-0472">Membrane</keyword>
<keyword id="KW-0597">Phosphoprotein</keyword>
<keyword id="KW-1185">Reference proteome</keyword>
<dbReference type="EMBL" id="BC079174">
    <property type="protein sequence ID" value="AAH79174.1"/>
    <property type="molecule type" value="mRNA"/>
</dbReference>
<dbReference type="RefSeq" id="NP_001004222.1">
    <property type="nucleotide sequence ID" value="NM_001004222.1"/>
</dbReference>
<dbReference type="RefSeq" id="XP_006229995.1">
    <property type="nucleotide sequence ID" value="XM_006229933.5"/>
</dbReference>
<dbReference type="SMR" id="Q6AY65"/>
<dbReference type="FunCoup" id="Q6AY65">
    <property type="interactions" value="1937"/>
</dbReference>
<dbReference type="STRING" id="10116.ENSRNOP00000025159"/>
<dbReference type="PhosphoSitePlus" id="Q6AY65"/>
<dbReference type="PaxDb" id="10116-ENSRNOP00000025159"/>
<dbReference type="Ensembl" id="ENSRNOT00000025159.5">
    <property type="protein sequence ID" value="ENSRNOP00000025159.3"/>
    <property type="gene ID" value="ENSRNOG00000018440.5"/>
</dbReference>
<dbReference type="GeneID" id="293344"/>
<dbReference type="KEGG" id="rno:293344"/>
<dbReference type="UCSC" id="RGD:1303204">
    <property type="organism name" value="rat"/>
</dbReference>
<dbReference type="AGR" id="RGD:1303204"/>
<dbReference type="CTD" id="23647"/>
<dbReference type="RGD" id="1303204">
    <property type="gene designation" value="Arfip2"/>
</dbReference>
<dbReference type="eggNOG" id="KOG3876">
    <property type="taxonomic scope" value="Eukaryota"/>
</dbReference>
<dbReference type="GeneTree" id="ENSGT00950000183040"/>
<dbReference type="HOGENOM" id="CLU_047975_2_0_1"/>
<dbReference type="InParanoid" id="Q6AY65"/>
<dbReference type="OMA" id="GRENYLA"/>
<dbReference type="OrthoDB" id="9994780at2759"/>
<dbReference type="PhylomeDB" id="Q6AY65"/>
<dbReference type="TreeFam" id="TF314945"/>
<dbReference type="Reactome" id="R-RNO-6811440">
    <property type="pathway name" value="Retrograde transport at the Trans-Golgi-Network"/>
</dbReference>
<dbReference type="PRO" id="PR:Q6AY65"/>
<dbReference type="Proteomes" id="UP000002494">
    <property type="component" value="Chromosome 1"/>
</dbReference>
<dbReference type="Bgee" id="ENSRNOG00000018440">
    <property type="expression patterns" value="Expressed in pancreas and 20 other cell types or tissues"/>
</dbReference>
<dbReference type="GO" id="GO:0005938">
    <property type="term" value="C:cell cortex"/>
    <property type="evidence" value="ECO:0000266"/>
    <property type="project" value="RGD"/>
</dbReference>
<dbReference type="GO" id="GO:0005737">
    <property type="term" value="C:cytoplasm"/>
    <property type="evidence" value="ECO:0000266"/>
    <property type="project" value="RGD"/>
</dbReference>
<dbReference type="GO" id="GO:0005730">
    <property type="term" value="C:nucleolus"/>
    <property type="evidence" value="ECO:0007669"/>
    <property type="project" value="Ensembl"/>
</dbReference>
<dbReference type="GO" id="GO:0001726">
    <property type="term" value="C:ruffle"/>
    <property type="evidence" value="ECO:0000266"/>
    <property type="project" value="RGD"/>
</dbReference>
<dbReference type="GO" id="GO:0032588">
    <property type="term" value="C:trans-Golgi network membrane"/>
    <property type="evidence" value="ECO:0000266"/>
    <property type="project" value="RGD"/>
</dbReference>
<dbReference type="GO" id="GO:0030742">
    <property type="term" value="F:GTP-dependent protein binding"/>
    <property type="evidence" value="ECO:0000266"/>
    <property type="project" value="RGD"/>
</dbReference>
<dbReference type="GO" id="GO:0042802">
    <property type="term" value="F:identical protein binding"/>
    <property type="evidence" value="ECO:0000266"/>
    <property type="project" value="RGD"/>
</dbReference>
<dbReference type="GO" id="GO:0140090">
    <property type="term" value="F:membrane curvature sensor activity"/>
    <property type="evidence" value="ECO:0000266"/>
    <property type="project" value="RGD"/>
</dbReference>
<dbReference type="GO" id="GO:0070273">
    <property type="term" value="F:phosphatidylinositol-4-phosphate binding"/>
    <property type="evidence" value="ECO:0000266"/>
    <property type="project" value="RGD"/>
</dbReference>
<dbReference type="GO" id="GO:0005543">
    <property type="term" value="F:phospholipid binding"/>
    <property type="evidence" value="ECO:0000318"/>
    <property type="project" value="GO_Central"/>
</dbReference>
<dbReference type="GO" id="GO:0019904">
    <property type="term" value="F:protein domain specific binding"/>
    <property type="evidence" value="ECO:0007669"/>
    <property type="project" value="InterPro"/>
</dbReference>
<dbReference type="GO" id="GO:0030036">
    <property type="term" value="P:actin cytoskeleton organization"/>
    <property type="evidence" value="ECO:0000266"/>
    <property type="project" value="RGD"/>
</dbReference>
<dbReference type="GO" id="GO:0006886">
    <property type="term" value="P:intracellular protein transport"/>
    <property type="evidence" value="ECO:0000318"/>
    <property type="project" value="GO_Central"/>
</dbReference>
<dbReference type="GO" id="GO:0000423">
    <property type="term" value="P:mitophagy"/>
    <property type="evidence" value="ECO:0000250"/>
    <property type="project" value="UniProtKB"/>
</dbReference>
<dbReference type="GO" id="GO:0034497">
    <property type="term" value="P:protein localization to phagophore assembly site"/>
    <property type="evidence" value="ECO:0000250"/>
    <property type="project" value="UniProtKB"/>
</dbReference>
<dbReference type="GO" id="GO:0034315">
    <property type="term" value="P:regulation of Arp2/3 complex-mediated actin nucleation"/>
    <property type="evidence" value="ECO:0000318"/>
    <property type="project" value="GO_Central"/>
</dbReference>
<dbReference type="CDD" id="cd07660">
    <property type="entry name" value="BAR_Arfaptin"/>
    <property type="match status" value="1"/>
</dbReference>
<dbReference type="FunFam" id="1.20.1270.60:FF:000003">
    <property type="entry name" value="arfaptin-2 isoform X1"/>
    <property type="match status" value="1"/>
</dbReference>
<dbReference type="Gene3D" id="1.20.1270.60">
    <property type="entry name" value="Arfaptin homology (AH) domain/BAR domain"/>
    <property type="match status" value="1"/>
</dbReference>
<dbReference type="InterPro" id="IPR027267">
    <property type="entry name" value="AH/BAR_dom_sf"/>
</dbReference>
<dbReference type="InterPro" id="IPR010504">
    <property type="entry name" value="AH_dom"/>
</dbReference>
<dbReference type="InterPro" id="IPR030798">
    <property type="entry name" value="Arfaptin_fam"/>
</dbReference>
<dbReference type="PANTHER" id="PTHR12141:SF3">
    <property type="entry name" value="ARFAPTIN-2"/>
    <property type="match status" value="1"/>
</dbReference>
<dbReference type="PANTHER" id="PTHR12141">
    <property type="entry name" value="ARFAPTIN-RELATED"/>
    <property type="match status" value="1"/>
</dbReference>
<dbReference type="Pfam" id="PF06456">
    <property type="entry name" value="Arfaptin"/>
    <property type="match status" value="1"/>
</dbReference>
<dbReference type="SMART" id="SM01015">
    <property type="entry name" value="Arfaptin"/>
    <property type="match status" value="1"/>
</dbReference>
<dbReference type="SUPFAM" id="SSF103657">
    <property type="entry name" value="BAR/IMD domain-like"/>
    <property type="match status" value="1"/>
</dbReference>
<dbReference type="PROSITE" id="PS50870">
    <property type="entry name" value="AH"/>
    <property type="match status" value="1"/>
</dbReference>
<reference key="1">
    <citation type="journal article" date="2004" name="Genome Res.">
        <title>The status, quality, and expansion of the NIH full-length cDNA project: the Mammalian Gene Collection (MGC).</title>
        <authorList>
            <consortium name="The MGC Project Team"/>
        </authorList>
    </citation>
    <scope>NUCLEOTIDE SEQUENCE [LARGE SCALE MRNA]</scope>
    <source>
        <strain>Brown Norway</strain>
        <tissue>Kidney</tissue>
    </source>
</reference>
<protein>
    <recommendedName>
        <fullName evidence="1">Arfaptin-2</fullName>
    </recommendedName>
    <alternativeName>
        <fullName evidence="1">ADP-ribosylation factor-interacting protein 2</fullName>
    </alternativeName>
</protein>